<feature type="chain" id="PRO_0000088871" description="BAG family molecular chaperone regulator 4">
    <location>
        <begin position="1"/>
        <end position="457"/>
    </location>
</feature>
<feature type="domain" description="BAG" evidence="3">
    <location>
        <begin position="379"/>
        <end position="456"/>
    </location>
</feature>
<feature type="region of interest" description="Disordered" evidence="4">
    <location>
        <begin position="1"/>
        <end position="104"/>
    </location>
</feature>
<feature type="region of interest" description="Disordered" evidence="4">
    <location>
        <begin position="128"/>
        <end position="335"/>
    </location>
</feature>
<feature type="region of interest" description="Disordered" evidence="4">
    <location>
        <begin position="348"/>
        <end position="374"/>
    </location>
</feature>
<feature type="compositionally biased region" description="Low complexity" evidence="4">
    <location>
        <begin position="1"/>
        <end position="20"/>
    </location>
</feature>
<feature type="compositionally biased region" description="Pro residues" evidence="4">
    <location>
        <begin position="31"/>
        <end position="48"/>
    </location>
</feature>
<feature type="compositionally biased region" description="Polar residues" evidence="4">
    <location>
        <begin position="160"/>
        <end position="193"/>
    </location>
</feature>
<feature type="compositionally biased region" description="Low complexity" evidence="4">
    <location>
        <begin position="255"/>
        <end position="268"/>
    </location>
</feature>
<feature type="compositionally biased region" description="Pro residues" evidence="4">
    <location>
        <begin position="284"/>
        <end position="295"/>
    </location>
</feature>
<feature type="compositionally biased region" description="Polar residues" evidence="4">
    <location>
        <begin position="326"/>
        <end position="335"/>
    </location>
</feature>
<feature type="compositionally biased region" description="Polar residues" evidence="4">
    <location>
        <begin position="348"/>
        <end position="365"/>
    </location>
</feature>
<feature type="modified residue" description="Phosphoserine" evidence="2">
    <location>
        <position position="7"/>
    </location>
</feature>
<feature type="modified residue" description="Omega-N-methylarginine" evidence="2">
    <location>
        <position position="41"/>
    </location>
</feature>
<feature type="modified residue" description="Omega-N-methylarginine" evidence="7">
    <location>
        <position position="54"/>
    </location>
</feature>
<feature type="modified residue" description="Omega-N-methylarginine" evidence="2">
    <location>
        <position position="108"/>
    </location>
</feature>
<feature type="modified residue" description="Omega-N-methylarginine" evidence="2">
    <location>
        <position position="185"/>
    </location>
</feature>
<feature type="mutagenesis site" description="Abolishes interaction with HSP70 and TNFRSF1A." evidence="5">
    <original>L</original>
    <variation>P</variation>
    <location>
        <position position="387"/>
    </location>
</feature>
<feature type="mutagenesis site" description="Abolishes interaction with HSP70 and TNFRSF1A." evidence="5">
    <original>L</original>
    <variation>P</variation>
    <location>
        <position position="416"/>
    </location>
</feature>
<feature type="mutagenesis site" description="Abolishes interaction with HSP70 and TNFRSF1A." evidence="5">
    <original>A</original>
    <variation>P</variation>
    <location>
        <position position="441"/>
    </location>
</feature>
<reference key="1">
    <citation type="journal article" date="2002" name="Mol. Cell. Biol.">
        <title>Tumor necrosis factor receptor 1 is an ATPase regulated by silencer of death domain.</title>
        <authorList>
            <person name="Miki K."/>
            <person name="Eddy E.M."/>
        </authorList>
    </citation>
    <scope>NUCLEOTIDE SEQUENCE [MRNA]</scope>
    <scope>MUTAGENESIS OF LEU-387; LEU-416 AND ALA-441</scope>
    <scope>INTERACTION WITH TNFRSF1A AND HSP70</scope>
    <source>
        <strain>BALB/cJ</strain>
        <tissue>Testis</tissue>
    </source>
</reference>
<reference key="2">
    <citation type="journal article" date="2005" name="Science">
        <title>The transcriptional landscape of the mammalian genome.</title>
        <authorList>
            <person name="Carninci P."/>
            <person name="Kasukawa T."/>
            <person name="Katayama S."/>
            <person name="Gough J."/>
            <person name="Frith M.C."/>
            <person name="Maeda N."/>
            <person name="Oyama R."/>
            <person name="Ravasi T."/>
            <person name="Lenhard B."/>
            <person name="Wells C."/>
            <person name="Kodzius R."/>
            <person name="Shimokawa K."/>
            <person name="Bajic V.B."/>
            <person name="Brenner S.E."/>
            <person name="Batalov S."/>
            <person name="Forrest A.R."/>
            <person name="Zavolan M."/>
            <person name="Davis M.J."/>
            <person name="Wilming L.G."/>
            <person name="Aidinis V."/>
            <person name="Allen J.E."/>
            <person name="Ambesi-Impiombato A."/>
            <person name="Apweiler R."/>
            <person name="Aturaliya R.N."/>
            <person name="Bailey T.L."/>
            <person name="Bansal M."/>
            <person name="Baxter L."/>
            <person name="Beisel K.W."/>
            <person name="Bersano T."/>
            <person name="Bono H."/>
            <person name="Chalk A.M."/>
            <person name="Chiu K.P."/>
            <person name="Choudhary V."/>
            <person name="Christoffels A."/>
            <person name="Clutterbuck D.R."/>
            <person name="Crowe M.L."/>
            <person name="Dalla E."/>
            <person name="Dalrymple B.P."/>
            <person name="de Bono B."/>
            <person name="Della Gatta G."/>
            <person name="di Bernardo D."/>
            <person name="Down T."/>
            <person name="Engstrom P."/>
            <person name="Fagiolini M."/>
            <person name="Faulkner G."/>
            <person name="Fletcher C.F."/>
            <person name="Fukushima T."/>
            <person name="Furuno M."/>
            <person name="Futaki S."/>
            <person name="Gariboldi M."/>
            <person name="Georgii-Hemming P."/>
            <person name="Gingeras T.R."/>
            <person name="Gojobori T."/>
            <person name="Green R.E."/>
            <person name="Gustincich S."/>
            <person name="Harbers M."/>
            <person name="Hayashi Y."/>
            <person name="Hensch T.K."/>
            <person name="Hirokawa N."/>
            <person name="Hill D."/>
            <person name="Huminiecki L."/>
            <person name="Iacono M."/>
            <person name="Ikeo K."/>
            <person name="Iwama A."/>
            <person name="Ishikawa T."/>
            <person name="Jakt M."/>
            <person name="Kanapin A."/>
            <person name="Katoh M."/>
            <person name="Kawasawa Y."/>
            <person name="Kelso J."/>
            <person name="Kitamura H."/>
            <person name="Kitano H."/>
            <person name="Kollias G."/>
            <person name="Krishnan S.P."/>
            <person name="Kruger A."/>
            <person name="Kummerfeld S.K."/>
            <person name="Kurochkin I.V."/>
            <person name="Lareau L.F."/>
            <person name="Lazarevic D."/>
            <person name="Lipovich L."/>
            <person name="Liu J."/>
            <person name="Liuni S."/>
            <person name="McWilliam S."/>
            <person name="Madan Babu M."/>
            <person name="Madera M."/>
            <person name="Marchionni L."/>
            <person name="Matsuda H."/>
            <person name="Matsuzawa S."/>
            <person name="Miki H."/>
            <person name="Mignone F."/>
            <person name="Miyake S."/>
            <person name="Morris K."/>
            <person name="Mottagui-Tabar S."/>
            <person name="Mulder N."/>
            <person name="Nakano N."/>
            <person name="Nakauchi H."/>
            <person name="Ng P."/>
            <person name="Nilsson R."/>
            <person name="Nishiguchi S."/>
            <person name="Nishikawa S."/>
            <person name="Nori F."/>
            <person name="Ohara O."/>
            <person name="Okazaki Y."/>
            <person name="Orlando V."/>
            <person name="Pang K.C."/>
            <person name="Pavan W.J."/>
            <person name="Pavesi G."/>
            <person name="Pesole G."/>
            <person name="Petrovsky N."/>
            <person name="Piazza S."/>
            <person name="Reed J."/>
            <person name="Reid J.F."/>
            <person name="Ring B.Z."/>
            <person name="Ringwald M."/>
            <person name="Rost B."/>
            <person name="Ruan Y."/>
            <person name="Salzberg S.L."/>
            <person name="Sandelin A."/>
            <person name="Schneider C."/>
            <person name="Schoenbach C."/>
            <person name="Sekiguchi K."/>
            <person name="Semple C.A."/>
            <person name="Seno S."/>
            <person name="Sessa L."/>
            <person name="Sheng Y."/>
            <person name="Shibata Y."/>
            <person name="Shimada H."/>
            <person name="Shimada K."/>
            <person name="Silva D."/>
            <person name="Sinclair B."/>
            <person name="Sperling S."/>
            <person name="Stupka E."/>
            <person name="Sugiura K."/>
            <person name="Sultana R."/>
            <person name="Takenaka Y."/>
            <person name="Taki K."/>
            <person name="Tammoja K."/>
            <person name="Tan S.L."/>
            <person name="Tang S."/>
            <person name="Taylor M.S."/>
            <person name="Tegner J."/>
            <person name="Teichmann S.A."/>
            <person name="Ueda H.R."/>
            <person name="van Nimwegen E."/>
            <person name="Verardo R."/>
            <person name="Wei C.L."/>
            <person name="Yagi K."/>
            <person name="Yamanishi H."/>
            <person name="Zabarovsky E."/>
            <person name="Zhu S."/>
            <person name="Zimmer A."/>
            <person name="Hide W."/>
            <person name="Bult C."/>
            <person name="Grimmond S.M."/>
            <person name="Teasdale R.D."/>
            <person name="Liu E.T."/>
            <person name="Brusic V."/>
            <person name="Quackenbush J."/>
            <person name="Wahlestedt C."/>
            <person name="Mattick J.S."/>
            <person name="Hume D.A."/>
            <person name="Kai C."/>
            <person name="Sasaki D."/>
            <person name="Tomaru Y."/>
            <person name="Fukuda S."/>
            <person name="Kanamori-Katayama M."/>
            <person name="Suzuki M."/>
            <person name="Aoki J."/>
            <person name="Arakawa T."/>
            <person name="Iida J."/>
            <person name="Imamura K."/>
            <person name="Itoh M."/>
            <person name="Kato T."/>
            <person name="Kawaji H."/>
            <person name="Kawagashira N."/>
            <person name="Kawashima T."/>
            <person name="Kojima M."/>
            <person name="Kondo S."/>
            <person name="Konno H."/>
            <person name="Nakano K."/>
            <person name="Ninomiya N."/>
            <person name="Nishio T."/>
            <person name="Okada M."/>
            <person name="Plessy C."/>
            <person name="Shibata K."/>
            <person name="Shiraki T."/>
            <person name="Suzuki S."/>
            <person name="Tagami M."/>
            <person name="Waki K."/>
            <person name="Watahiki A."/>
            <person name="Okamura-Oho Y."/>
            <person name="Suzuki H."/>
            <person name="Kawai J."/>
            <person name="Hayashizaki Y."/>
        </authorList>
    </citation>
    <scope>NUCLEOTIDE SEQUENCE [LARGE SCALE MRNA]</scope>
    <source>
        <strain>C57BL/6J</strain>
        <tissue>Diencephalon</tissue>
        <tissue>Embryonic stem cell</tissue>
    </source>
</reference>
<reference key="3">
    <citation type="journal article" date="2004" name="Genome Res.">
        <title>The status, quality, and expansion of the NIH full-length cDNA project: the Mammalian Gene Collection (MGC).</title>
        <authorList>
            <consortium name="The MGC Project Team"/>
        </authorList>
    </citation>
    <scope>NUCLEOTIDE SEQUENCE [LARGE SCALE MRNA]</scope>
    <source>
        <strain>FVB/N</strain>
        <tissue>Brain</tissue>
        <tissue>Mammary gland</tissue>
    </source>
</reference>
<reference key="4">
    <citation type="journal article" date="2010" name="Cell">
        <title>A tissue-specific atlas of mouse protein phosphorylation and expression.</title>
        <authorList>
            <person name="Huttlin E.L."/>
            <person name="Jedrychowski M.P."/>
            <person name="Elias J.E."/>
            <person name="Goswami T."/>
            <person name="Rad R."/>
            <person name="Beausoleil S.A."/>
            <person name="Villen J."/>
            <person name="Haas W."/>
            <person name="Sowa M.E."/>
            <person name="Gygi S.P."/>
        </authorList>
    </citation>
    <scope>IDENTIFICATION BY MASS SPECTROMETRY [LARGE SCALE ANALYSIS]</scope>
    <source>
        <tissue>Brain</tissue>
        <tissue>Testis</tissue>
    </source>
</reference>
<reference key="5">
    <citation type="journal article" date="2014" name="Mol. Cell. Proteomics">
        <title>Immunoaffinity enrichment and mass spectrometry analysis of protein methylation.</title>
        <authorList>
            <person name="Guo A."/>
            <person name="Gu H."/>
            <person name="Zhou J."/>
            <person name="Mulhern D."/>
            <person name="Wang Y."/>
            <person name="Lee K.A."/>
            <person name="Yang V."/>
            <person name="Aguiar M."/>
            <person name="Kornhauser J."/>
            <person name="Jia X."/>
            <person name="Ren J."/>
            <person name="Beausoleil S.A."/>
            <person name="Silva J.C."/>
            <person name="Vemulapalli V."/>
            <person name="Bedford M.T."/>
            <person name="Comb M.J."/>
        </authorList>
    </citation>
    <scope>METHYLATION [LARGE SCALE ANALYSIS] AT ARG-54</scope>
    <scope>IDENTIFICATION BY MASS SPECTROMETRY [LARGE SCALE ANALYSIS]</scope>
    <source>
        <tissue>Brain</tissue>
        <tissue>Embryo</tissue>
    </source>
</reference>
<proteinExistence type="evidence at protein level"/>
<keyword id="KW-0143">Chaperone</keyword>
<keyword id="KW-0963">Cytoplasm</keyword>
<keyword id="KW-0488">Methylation</keyword>
<keyword id="KW-0597">Phosphoprotein</keyword>
<keyword id="KW-1185">Reference proteome</keyword>
<dbReference type="EMBL" id="AF332863">
    <property type="protein sequence ID" value="AAL99586.1"/>
    <property type="molecule type" value="mRNA"/>
</dbReference>
<dbReference type="EMBL" id="AK010765">
    <property type="protein sequence ID" value="BAB27167.1"/>
    <property type="molecule type" value="mRNA"/>
</dbReference>
<dbReference type="EMBL" id="AK136899">
    <property type="protein sequence ID" value="BAE23161.1"/>
    <property type="molecule type" value="mRNA"/>
</dbReference>
<dbReference type="EMBL" id="AK162658">
    <property type="protein sequence ID" value="BAE37009.1"/>
    <property type="molecule type" value="mRNA"/>
</dbReference>
<dbReference type="EMBL" id="BC009102">
    <property type="protein sequence ID" value="AAH09102.1"/>
    <property type="molecule type" value="mRNA"/>
</dbReference>
<dbReference type="EMBL" id="BC037239">
    <property type="protein sequence ID" value="AAH37239.1"/>
    <property type="status" value="ALT_INIT"/>
    <property type="molecule type" value="mRNA"/>
</dbReference>
<dbReference type="EMBL" id="BC058518">
    <property type="protein sequence ID" value="AAH58518.1"/>
    <property type="molecule type" value="mRNA"/>
</dbReference>
<dbReference type="CCDS" id="CCDS22201.1"/>
<dbReference type="RefSeq" id="NP_080397.1">
    <property type="nucleotide sequence ID" value="NM_026121.3"/>
</dbReference>
<dbReference type="SMR" id="Q8CI61"/>
<dbReference type="BioGRID" id="212150">
    <property type="interactions" value="17"/>
</dbReference>
<dbReference type="FunCoup" id="Q8CI61">
    <property type="interactions" value="2640"/>
</dbReference>
<dbReference type="STRING" id="10090.ENSMUSP00000044725"/>
<dbReference type="iPTMnet" id="Q8CI61"/>
<dbReference type="PhosphoSitePlus" id="Q8CI61"/>
<dbReference type="PaxDb" id="10090-ENSMUSP00000044725"/>
<dbReference type="ProteomicsDB" id="265201"/>
<dbReference type="Pumba" id="Q8CI61"/>
<dbReference type="Antibodypedia" id="4434">
    <property type="antibodies" value="396 antibodies from 41 providers"/>
</dbReference>
<dbReference type="DNASU" id="67384"/>
<dbReference type="Ensembl" id="ENSMUST00000038498.10">
    <property type="protein sequence ID" value="ENSMUSP00000044725.9"/>
    <property type="gene ID" value="ENSMUSG00000037316.10"/>
</dbReference>
<dbReference type="GeneID" id="67384"/>
<dbReference type="KEGG" id="mmu:67384"/>
<dbReference type="UCSC" id="uc009lgy.1">
    <property type="organism name" value="mouse"/>
</dbReference>
<dbReference type="AGR" id="MGI:1914634"/>
<dbReference type="CTD" id="9530"/>
<dbReference type="MGI" id="MGI:1914634">
    <property type="gene designation" value="Bag4"/>
</dbReference>
<dbReference type="VEuPathDB" id="HostDB:ENSMUSG00000037316"/>
<dbReference type="eggNOG" id="KOG4361">
    <property type="taxonomic scope" value="Eukaryota"/>
</dbReference>
<dbReference type="GeneTree" id="ENSGT00940000158936"/>
<dbReference type="HOGENOM" id="CLU_051025_0_0_1"/>
<dbReference type="InParanoid" id="Q8CI61"/>
<dbReference type="OMA" id="WNSARPR"/>
<dbReference type="OrthoDB" id="8614100at2759"/>
<dbReference type="PhylomeDB" id="Q8CI61"/>
<dbReference type="TreeFam" id="TF102013"/>
<dbReference type="Reactome" id="R-MMU-3371453">
    <property type="pathway name" value="Regulation of HSF1-mediated heat shock response"/>
</dbReference>
<dbReference type="Reactome" id="R-MMU-75893">
    <property type="pathway name" value="TNF signaling"/>
</dbReference>
<dbReference type="BioGRID-ORCS" id="67384">
    <property type="hits" value="3 hits in 80 CRISPR screens"/>
</dbReference>
<dbReference type="ChiTaRS" id="Bag4">
    <property type="organism name" value="mouse"/>
</dbReference>
<dbReference type="PRO" id="PR:Q8CI61"/>
<dbReference type="Proteomes" id="UP000000589">
    <property type="component" value="Chromosome 8"/>
</dbReference>
<dbReference type="RNAct" id="Q8CI61">
    <property type="molecule type" value="protein"/>
</dbReference>
<dbReference type="Bgee" id="ENSMUSG00000037316">
    <property type="expression patterns" value="Expressed in primary oocyte and 249 other cell types or tissues"/>
</dbReference>
<dbReference type="ExpressionAtlas" id="Q8CI61">
    <property type="expression patterns" value="baseline and differential"/>
</dbReference>
<dbReference type="GO" id="GO:0005829">
    <property type="term" value="C:cytosol"/>
    <property type="evidence" value="ECO:0007669"/>
    <property type="project" value="Ensembl"/>
</dbReference>
<dbReference type="GO" id="GO:0005634">
    <property type="term" value="C:nucleus"/>
    <property type="evidence" value="ECO:0007669"/>
    <property type="project" value="Ensembl"/>
</dbReference>
<dbReference type="GO" id="GO:0005886">
    <property type="term" value="C:plasma membrane"/>
    <property type="evidence" value="ECO:0007669"/>
    <property type="project" value="Ensembl"/>
</dbReference>
<dbReference type="GO" id="GO:0044877">
    <property type="term" value="F:protein-containing complex binding"/>
    <property type="evidence" value="ECO:0007669"/>
    <property type="project" value="Ensembl"/>
</dbReference>
<dbReference type="GO" id="GO:0051087">
    <property type="term" value="F:protein-folding chaperone binding"/>
    <property type="evidence" value="ECO:0007669"/>
    <property type="project" value="InterPro"/>
</dbReference>
<dbReference type="GO" id="GO:0031625">
    <property type="term" value="F:ubiquitin protein ligase binding"/>
    <property type="evidence" value="ECO:0007669"/>
    <property type="project" value="Ensembl"/>
</dbReference>
<dbReference type="GO" id="GO:0071364">
    <property type="term" value="P:cellular response to epidermal growth factor stimulus"/>
    <property type="evidence" value="ECO:0000314"/>
    <property type="project" value="UniProtKB"/>
</dbReference>
<dbReference type="GO" id="GO:0071356">
    <property type="term" value="P:cellular response to tumor necrosis factor"/>
    <property type="evidence" value="ECO:0007669"/>
    <property type="project" value="Ensembl"/>
</dbReference>
<dbReference type="GO" id="GO:0090367">
    <property type="term" value="P:negative regulation of mRNA modification"/>
    <property type="evidence" value="ECO:0007669"/>
    <property type="project" value="Ensembl"/>
</dbReference>
<dbReference type="GO" id="GO:2001145">
    <property type="term" value="P:negative regulation of phosphatidylinositol-3,4,5-trisphosphate 5-phosphatase activity"/>
    <property type="evidence" value="ECO:0000314"/>
    <property type="project" value="UniProtKB"/>
</dbReference>
<dbReference type="GO" id="GO:1903215">
    <property type="term" value="P:negative regulation of protein targeting to mitochondrion"/>
    <property type="evidence" value="ECO:0007669"/>
    <property type="project" value="Ensembl"/>
</dbReference>
<dbReference type="GO" id="GO:0030838">
    <property type="term" value="P:positive regulation of actin filament polymerization"/>
    <property type="evidence" value="ECO:0000315"/>
    <property type="project" value="UniProtKB"/>
</dbReference>
<dbReference type="GO" id="GO:0045785">
    <property type="term" value="P:positive regulation of cell adhesion"/>
    <property type="evidence" value="ECO:0000315"/>
    <property type="project" value="UniProtKB"/>
</dbReference>
<dbReference type="GO" id="GO:0010763">
    <property type="term" value="P:positive regulation of fibroblast migration"/>
    <property type="evidence" value="ECO:0000315"/>
    <property type="project" value="UniProtKB"/>
</dbReference>
<dbReference type="GO" id="GO:0033138">
    <property type="term" value="P:positive regulation of peptidyl-serine phosphorylation"/>
    <property type="evidence" value="ECO:0000315"/>
    <property type="project" value="UniProtKB"/>
</dbReference>
<dbReference type="GO" id="GO:0051897">
    <property type="term" value="P:positive regulation of phosphatidylinositol 3-kinase/protein kinase B signal transduction"/>
    <property type="evidence" value="ECO:0000315"/>
    <property type="project" value="UniProtKB"/>
</dbReference>
<dbReference type="GO" id="GO:0051496">
    <property type="term" value="P:positive regulation of stress fiber assembly"/>
    <property type="evidence" value="ECO:0000315"/>
    <property type="project" value="UniProtKB"/>
</dbReference>
<dbReference type="GO" id="GO:0072659">
    <property type="term" value="P:protein localization to plasma membrane"/>
    <property type="evidence" value="ECO:0000314"/>
    <property type="project" value="UniProtKB"/>
</dbReference>
<dbReference type="GO" id="GO:0097178">
    <property type="term" value="P:ruffle assembly"/>
    <property type="evidence" value="ECO:0000315"/>
    <property type="project" value="UniProtKB"/>
</dbReference>
<dbReference type="FunFam" id="1.20.58.120:FF:000001">
    <property type="entry name" value="BAG family molecular chaperone regulator 4"/>
    <property type="match status" value="1"/>
</dbReference>
<dbReference type="Gene3D" id="1.20.58.120">
    <property type="entry name" value="BAG domain"/>
    <property type="match status" value="1"/>
</dbReference>
<dbReference type="InterPro" id="IPR039773">
    <property type="entry name" value="BAG_chaperone_regulator"/>
</dbReference>
<dbReference type="InterPro" id="IPR036533">
    <property type="entry name" value="BAG_dom_sf"/>
</dbReference>
<dbReference type="InterPro" id="IPR003103">
    <property type="entry name" value="BAG_domain"/>
</dbReference>
<dbReference type="PANTHER" id="PTHR12329:SF10">
    <property type="entry name" value="BAG FAMILY MOLECULAR CHAPERONE REGULATOR 4"/>
    <property type="match status" value="1"/>
</dbReference>
<dbReference type="PANTHER" id="PTHR12329">
    <property type="entry name" value="BCL2-ASSOCIATED ATHANOGENE"/>
    <property type="match status" value="1"/>
</dbReference>
<dbReference type="Pfam" id="PF02179">
    <property type="entry name" value="BAG"/>
    <property type="match status" value="1"/>
</dbReference>
<dbReference type="SMART" id="SM00264">
    <property type="entry name" value="BAG"/>
    <property type="match status" value="1"/>
</dbReference>
<dbReference type="SUPFAM" id="SSF63491">
    <property type="entry name" value="BAG domain"/>
    <property type="match status" value="1"/>
</dbReference>
<dbReference type="PROSITE" id="PS51035">
    <property type="entry name" value="BAG"/>
    <property type="match status" value="1"/>
</dbReference>
<evidence type="ECO:0000250" key="1"/>
<evidence type="ECO:0000250" key="2">
    <source>
        <dbReference type="UniProtKB" id="O95429"/>
    </source>
</evidence>
<evidence type="ECO:0000255" key="3">
    <source>
        <dbReference type="PROSITE-ProRule" id="PRU00369"/>
    </source>
</evidence>
<evidence type="ECO:0000256" key="4">
    <source>
        <dbReference type="SAM" id="MobiDB-lite"/>
    </source>
</evidence>
<evidence type="ECO:0000269" key="5">
    <source>
    </source>
</evidence>
<evidence type="ECO:0000305" key="6"/>
<evidence type="ECO:0007744" key="7">
    <source>
    </source>
</evidence>
<sequence length="457" mass="49095">MSALRRSGYGPSDGPSYGRYYGPGGGDVPVHVPPPLYPPLRPEPPQPPVSWRGRGGAPAETTWPGEGAGGDGYYPSGGAWAEASRAGGGHQEQPPYPGYNSNYWNSVRPRAPYPGSYSVRPELQGQSLNSYANGAYGPPYPPGPGASTASYSGAYYVPGYTQSNYSTEVPNTYRSPGNSPTPMSRWMYSQQDCPTEAPPLRGQVPGYPASQNPGMTLPHYPYGDGNRAVPQSGGTGRPQDDAWASSAYGMGARYPWPSAAPSAPSAGSLYMTESASPWPGNSSPQPPPSPPPQQPKDPSYSYNPSGQGLSRHSFPCSVHQYESPGAVNNDNSDLLDSQVQYSAEPQLYGNASSEHPSNQVPSNNLPEECFSSDEGTPPSIKKIIHVLEKVQFLEQEVEEFVGKKTDKAYWLLEEMLTKELLELDSVETGGQDSVRQARKEAVCKIQAILEKLEKKGL</sequence>
<accession>Q8CI61</accession>
<accession>Q3TRL9</accession>
<accession>Q91VT5</accession>
<accession>Q9CWG2</accession>
<name>BAG4_MOUSE</name>
<gene>
    <name type="primary">Bag4</name>
    <name type="synonym">Sodd</name>
</gene>
<protein>
    <recommendedName>
        <fullName>BAG family molecular chaperone regulator 4</fullName>
        <shortName>BAG-4</shortName>
    </recommendedName>
    <alternativeName>
        <fullName>Bcl-2-associated athanogene 4</fullName>
    </alternativeName>
    <alternativeName>
        <fullName>Silencer of death domains</fullName>
    </alternativeName>
</protein>
<organism>
    <name type="scientific">Mus musculus</name>
    <name type="common">Mouse</name>
    <dbReference type="NCBI Taxonomy" id="10090"/>
    <lineage>
        <taxon>Eukaryota</taxon>
        <taxon>Metazoa</taxon>
        <taxon>Chordata</taxon>
        <taxon>Craniata</taxon>
        <taxon>Vertebrata</taxon>
        <taxon>Euteleostomi</taxon>
        <taxon>Mammalia</taxon>
        <taxon>Eutheria</taxon>
        <taxon>Euarchontoglires</taxon>
        <taxon>Glires</taxon>
        <taxon>Rodentia</taxon>
        <taxon>Myomorpha</taxon>
        <taxon>Muroidea</taxon>
        <taxon>Muridae</taxon>
        <taxon>Murinae</taxon>
        <taxon>Mus</taxon>
        <taxon>Mus</taxon>
    </lineage>
</organism>
<comment type="function">
    <text evidence="1">Inhibits the chaperone activity of HSP70/HSC70 by promoting substrate release. Prevents constitutive TNFRSF1A signaling (By similarity). Negative regulator of PRKN translocation to damaged mitochondria (By similarity).</text>
</comment>
<comment type="subunit">
    <text evidence="1">Binds to the ATPase domain of HSP/HSC70 chaperones. Binds to the death domain of TNFRSF12 (By similarity). Binds to the death domain of TNFRSF1A in the absence of TNF and thereby prevents binding of adapter molecules such as TRADD or TRAF2. Interacts with PRKN (By similarity).</text>
</comment>
<comment type="subcellular location">
    <subcellularLocation>
        <location>Cytoplasm</location>
    </subcellularLocation>
</comment>
<comment type="sequence caution" evidence="6">
    <conflict type="erroneous initiation">
        <sequence resource="EMBL-CDS" id="AAH37239"/>
    </conflict>
</comment>